<evidence type="ECO:0000255" key="1"/>
<evidence type="ECO:0000255" key="2">
    <source>
        <dbReference type="PROSITE-ProRule" id="PRU00498"/>
    </source>
</evidence>
<evidence type="ECO:0000256" key="3">
    <source>
        <dbReference type="SAM" id="MobiDB-lite"/>
    </source>
</evidence>
<evidence type="ECO:0000269" key="4">
    <source>
    </source>
</evidence>
<evidence type="ECO:0000269" key="5">
    <source>
    </source>
</evidence>
<evidence type="ECO:0000303" key="6">
    <source>
    </source>
</evidence>
<evidence type="ECO:0000305" key="7"/>
<evidence type="ECO:0000312" key="8">
    <source>
        <dbReference type="EMBL" id="ACZ28268.1"/>
    </source>
</evidence>
<evidence type="ECO:0000312" key="9">
    <source>
        <dbReference type="EMBL" id="ACZ28269.1"/>
    </source>
</evidence>
<evidence type="ECO:0000312" key="10">
    <source>
        <dbReference type="EMBL" id="ACZ28275.1"/>
    </source>
</evidence>
<evidence type="ECO:0000312" key="11">
    <source>
        <dbReference type="EMBL" id="ACZ28276.1"/>
    </source>
</evidence>
<dbReference type="EMBL" id="EZ419914">
    <property type="protein sequence ID" value="ACZ28269.1"/>
    <property type="molecule type" value="mRNA"/>
</dbReference>
<dbReference type="EMBL" id="EZ419913">
    <property type="protein sequence ID" value="ACZ28268.1"/>
    <property type="molecule type" value="mRNA"/>
</dbReference>
<dbReference type="EMBL" id="EZ419920">
    <property type="protein sequence ID" value="ACZ28275.1"/>
    <property type="molecule type" value="mRNA"/>
</dbReference>
<dbReference type="EMBL" id="EZ419921">
    <property type="protein sequence ID" value="ACZ28276.1"/>
    <property type="molecule type" value="mRNA"/>
</dbReference>
<dbReference type="GO" id="GO:0005576">
    <property type="term" value="C:extracellular region"/>
    <property type="evidence" value="ECO:0007669"/>
    <property type="project" value="UniProtKB-SubCell"/>
</dbReference>
<dbReference type="GO" id="GO:0005518">
    <property type="term" value="F:collagen binding"/>
    <property type="evidence" value="ECO:0000314"/>
    <property type="project" value="UniProtKB"/>
</dbReference>
<dbReference type="GO" id="GO:0090729">
    <property type="term" value="F:toxin activity"/>
    <property type="evidence" value="ECO:0007669"/>
    <property type="project" value="UniProtKB-KW"/>
</dbReference>
<dbReference type="GO" id="GO:0035893">
    <property type="term" value="P:suppression of platelet aggregation in another organism"/>
    <property type="evidence" value="ECO:0000314"/>
    <property type="project" value="UniProtKB"/>
</dbReference>
<dbReference type="InterPro" id="IPR056799">
    <property type="entry name" value="ALL3/gSG7_salivary-like_helix"/>
</dbReference>
<dbReference type="Pfam" id="PF25001">
    <property type="entry name" value="Aegyptin_C"/>
    <property type="match status" value="1"/>
</dbReference>
<feature type="signal peptide" evidence="1">
    <location>
        <begin position="1"/>
        <end position="20"/>
    </location>
</feature>
<feature type="chain" id="PRO_5003022442" description="Simplagrin" evidence="1">
    <location>
        <begin position="21"/>
        <end position="286"/>
    </location>
</feature>
<feature type="region of interest" description="Disordered" evidence="3">
    <location>
        <begin position="17"/>
        <end position="179"/>
    </location>
</feature>
<feature type="compositionally biased region" description="Acidic residues" evidence="3">
    <location>
        <begin position="24"/>
        <end position="69"/>
    </location>
</feature>
<feature type="compositionally biased region" description="Acidic residues" evidence="3">
    <location>
        <begin position="103"/>
        <end position="129"/>
    </location>
</feature>
<feature type="compositionally biased region" description="Low complexity" evidence="3">
    <location>
        <begin position="166"/>
        <end position="177"/>
    </location>
</feature>
<feature type="glycosylation site" description="N-linked (GlcNAc...) asparagine" evidence="2">
    <location>
        <position position="116"/>
    </location>
</feature>
<feature type="sequence conflict" description="In Ref. 1; ACZ28268/ACZ28275/ACZ28276." evidence="7" ref="1">
    <original>Q</original>
    <variation>E</variation>
    <location>
        <position position="36"/>
    </location>
</feature>
<feature type="sequence conflict" description="In Ref. 1; ACZ28268/ACZ28276." evidence="7" ref="1">
    <original>H</original>
    <variation>D</variation>
    <location>
        <position position="45"/>
    </location>
</feature>
<feature type="sequence conflict" description="In Ref. 1; ACZ28268/ACZ28275." evidence="7" ref="1">
    <original>A</original>
    <variation>V</variation>
    <location>
        <position position="72"/>
    </location>
</feature>
<feature type="sequence conflict" description="In Ref. 1; ACZ28268." evidence="7" ref="1">
    <original>RT</original>
    <variation>NA</variation>
    <location>
        <begin position="99"/>
        <end position="100"/>
    </location>
</feature>
<feature type="sequence conflict" description="In Ref. 1; ACZ28275." evidence="7" ref="1">
    <original>R</original>
    <variation>K</variation>
    <location>
        <position position="99"/>
    </location>
</feature>
<feature type="sequence conflict" description="In Ref. 1; ACZ28268." evidence="7" ref="1">
    <original>EDAA</original>
    <variation>VDAG</variation>
    <location>
        <begin position="143"/>
        <end position="146"/>
    </location>
</feature>
<feature type="sequence conflict" description="In Ref. 1; ACZ28276." evidence="7" ref="1">
    <original>A</original>
    <variation>G</variation>
    <location>
        <position position="146"/>
    </location>
</feature>
<feature type="sequence conflict" description="In Ref. 1; ACZ28276." evidence="7" ref="1">
    <original>N</original>
    <variation>S</variation>
    <location>
        <position position="167"/>
    </location>
</feature>
<feature type="sequence conflict" description="In Ref. 1; ACZ28275." evidence="7" ref="1">
    <original>A</original>
    <variation>V</variation>
    <location>
        <position position="169"/>
    </location>
</feature>
<feature type="sequence conflict" description="In Ref. 1; ACZ28276." evidence="7" ref="1">
    <original>QGGYY</original>
    <variation>KGATIK</variation>
    <location>
        <begin position="282"/>
        <end position="286"/>
    </location>
</feature>
<feature type="sequence conflict" description="In Ref. 1; ACZ28275." evidence="7" ref="1">
    <original>Q</original>
    <variation>P</variation>
    <location>
        <position position="282"/>
    </location>
</feature>
<proteinExistence type="evidence at protein level"/>
<reference evidence="8 9 10 11" key="1">
    <citation type="journal article" date="2010" name="Am. J. Trop. Med. Hyg.">
        <title>An insight into the sialotranscriptome of Simulium nigrimanum, a black fly associated with fogo selvagem in South America.</title>
        <authorList>
            <person name="Ribeiro J.M."/>
            <person name="Valenzuela J.G."/>
            <person name="Pham V.M."/>
            <person name="Kleeman L."/>
            <person name="Barbian K.D."/>
            <person name="Favreau A.J."/>
            <person name="Eaton D.P."/>
            <person name="Aoki V."/>
            <person name="Hans-Filho G."/>
            <person name="Rivitti E.A."/>
            <person name="Diaz L.A."/>
        </authorList>
    </citation>
    <scope>NUCLEOTIDE SEQUENCE [LARGE SCALE MRNA]</scope>
    <scope>TISSUE SPECIFICITY</scope>
    <source>
        <tissue evidence="9">Salivary gland</tissue>
    </source>
</reference>
<reference evidence="7" key="2">
    <citation type="journal article" date="2014" name="PLoS Negl. Trop. Dis.">
        <title>Simplagrin, a platelet aggregation inhibitor from Simulium nigrimanum salivary glands specifically binds to the Von Willebrand factor receptor in collagen and inhibits carotid thrombus formation in vivo.</title>
        <authorList>
            <person name="Chagas A.C."/>
            <person name="McPhie P."/>
            <person name="San H."/>
            <person name="Narum D."/>
            <person name="Reiter K."/>
            <person name="Tokomasu F."/>
            <person name="Brayner F.A."/>
            <person name="Alves L.C."/>
            <person name="Ribeiro J.M."/>
            <person name="Calvo E."/>
        </authorList>
    </citation>
    <scope>FUNCTION</scope>
    <scope>SUBUNIT</scope>
    <scope>INTERACTION WITH HOST COLLAGEN</scope>
    <scope>GLYCOSYLATION</scope>
</reference>
<protein>
    <recommendedName>
        <fullName evidence="6">Simplagrin</fullName>
    </recommendedName>
    <alternativeName>
        <fullName evidence="6">Aegyptin-like protein</fullName>
    </alternativeName>
    <alternativeName>
        <fullName evidence="6">Sim-50</fullName>
    </alternativeName>
</protein>
<accession>D1FQ14</accession>
<accession>D1FQ13</accession>
<accession>D1FQ20</accession>
<accession>D1FQ21</accession>
<sequence length="286" mass="31071">MKKFCLIFLLLALTALHVKGSPIPDEESEETEDAEQEEDAEEEEHAEEEAQEDGDQTQDTDQESDDGQEETANQGSDEQQEEDGSHGTDETDDEAAGSRTEDVESGGDEQNDGEENGSQENGEEVTGGEDDSHGAQDSEGGEEDAAAQEAGGKKSKGKGAKGGQGSNRAGSSSGGEESAAHTYQEVMRILNGIKINAKEPLKSRLVNGLQYLKVDTINRVENIQKFSRIEHCFGNLDHIVQLYAGDAVERNDYCKGTCIDMVSNEFRGQMEELTSRLYPCLQGGYY</sequence>
<keyword id="KW-0325">Glycoprotein</keyword>
<keyword id="KW-1199">Hemostasis impairing toxin</keyword>
<keyword id="KW-1201">Platelet aggregation inhibiting toxin</keyword>
<keyword id="KW-0964">Secreted</keyword>
<keyword id="KW-0732">Signal</keyword>
<keyword id="KW-0800">Toxin</keyword>
<comment type="function">
    <text evidence="5">Inhibits host platelet aggregation induced by low concentrations of collagen via blocking the von Willebrand Factor (VWF) interaction with collagen.</text>
</comment>
<comment type="subunit">
    <text evidence="5">Monomeric in solution; likely has an elongated non-globular form (PubMed:24921659). Interacts with human and rat collagens (via a RGQOGVMGF peptide, where O is hydroxyproline) (PubMed:24921659).</text>
</comment>
<comment type="subcellular location">
    <subcellularLocation>
        <location evidence="7">Secreted</location>
    </subcellularLocation>
</comment>
<comment type="tissue specificity">
    <text evidence="4">Salivary gland.</text>
</comment>
<comment type="PTM">
    <text evidence="5">Not glycosylated.</text>
</comment>
<comment type="miscellaneous">
    <text evidence="5">Does not interact with host vitronectin (VTN), fibronectin (FN1), fibrinogen, VWF, recombinant platelet receptors GPVI (GP6) and integrin alpha-2/beta-1 (ITGA2/ITGB1), thrombin (F2), and coagulation factors Va (F5) and Xa (F10) (PubMed:24921659). Has no effect on host blood clotting, vasodilation, inflammation and murine splenocyte proliferation (PubMed:24921659). Reduces occlusive thrombus formation time in photochemically induced thrombosis model in mice without compromising hemostasis (PubMed:24921659).</text>
</comment>
<comment type="similarity">
    <text evidence="7">Belongs to the aegyptin family.</text>
</comment>
<name>ALL3_SIMNI</name>
<organism>
    <name type="scientific">Simulium nigrimanum</name>
    <name type="common">Black fly</name>
    <dbReference type="NCBI Taxonomy" id="683695"/>
    <lineage>
        <taxon>Eukaryota</taxon>
        <taxon>Metazoa</taxon>
        <taxon>Ecdysozoa</taxon>
        <taxon>Arthropoda</taxon>
        <taxon>Hexapoda</taxon>
        <taxon>Insecta</taxon>
        <taxon>Pterygota</taxon>
        <taxon>Neoptera</taxon>
        <taxon>Endopterygota</taxon>
        <taxon>Diptera</taxon>
        <taxon>Nematocera</taxon>
        <taxon>Chironomoidea</taxon>
        <taxon>Simuliidae</taxon>
        <taxon>Simulium</taxon>
    </lineage>
</organism>